<feature type="chain" id="PRO_0000221683" description="DNA-binding protein">
    <location>
        <begin position="1"/>
        <end position="474"/>
    </location>
</feature>
<feature type="region of interest" description="Disordered" evidence="2">
    <location>
        <begin position="1"/>
        <end position="34"/>
    </location>
</feature>
<feature type="region of interest" description="Flexible loop" evidence="1">
    <location>
        <begin position="244"/>
        <end position="278"/>
    </location>
</feature>
<feature type="region of interest" description="C-terminal arm, DBP binding" evidence="1">
    <location>
        <begin position="460"/>
        <end position="474"/>
    </location>
</feature>
<feature type="binding site" evidence="1">
    <location>
        <position position="231"/>
    </location>
    <ligand>
        <name>Zn(2+)</name>
        <dbReference type="ChEBI" id="CHEBI:29105"/>
        <label>1</label>
    </ligand>
</feature>
<feature type="binding site" evidence="1">
    <location>
        <position position="233"/>
    </location>
    <ligand>
        <name>Zn(2+)</name>
        <dbReference type="ChEBI" id="CHEBI:29105"/>
        <label>1</label>
    </ligand>
</feature>
<feature type="binding site" evidence="1">
    <location>
        <position position="286"/>
    </location>
    <ligand>
        <name>Zn(2+)</name>
        <dbReference type="ChEBI" id="CHEBI:29105"/>
        <label>1</label>
    </ligand>
</feature>
<feature type="binding site" evidence="1">
    <location>
        <position position="302"/>
    </location>
    <ligand>
        <name>Zn(2+)</name>
        <dbReference type="ChEBI" id="CHEBI:29105"/>
        <label>1</label>
    </ligand>
</feature>
<feature type="binding site" evidence="1">
    <location>
        <position position="343"/>
    </location>
    <ligand>
        <name>Zn(2+)</name>
        <dbReference type="ChEBI" id="CHEBI:29105"/>
        <label>2</label>
    </ligand>
</feature>
<feature type="binding site" evidence="1">
    <location>
        <position position="345"/>
    </location>
    <ligand>
        <name>Zn(2+)</name>
        <dbReference type="ChEBI" id="CHEBI:29105"/>
        <label>2</label>
    </ligand>
</feature>
<feature type="binding site" evidence="1">
    <location>
        <position position="397"/>
    </location>
    <ligand>
        <name>Zn(2+)</name>
        <dbReference type="ChEBI" id="CHEBI:29105"/>
        <label>2</label>
    </ligand>
</feature>
<feature type="binding site" evidence="1">
    <location>
        <position position="413"/>
    </location>
    <ligand>
        <name>Zn(2+)</name>
        <dbReference type="ChEBI" id="CHEBI:29105"/>
        <label>2</label>
    </ligand>
</feature>
<feature type="modified residue" description="Phosphotyrosine; by host" evidence="1">
    <location>
        <position position="142"/>
    </location>
</feature>
<organismHost>
    <name type="scientific">Homo sapiens</name>
    <name type="common">Human</name>
    <dbReference type="NCBI Taxonomy" id="9606"/>
</organismHost>
<keyword id="KW-0235">DNA replication</keyword>
<keyword id="KW-0238">DNA-binding</keyword>
<keyword id="KW-0244">Early protein</keyword>
<keyword id="KW-1048">Host nucleus</keyword>
<keyword id="KW-0945">Host-virus interaction</keyword>
<keyword id="KW-0479">Metal-binding</keyword>
<keyword id="KW-0597">Phosphoprotein</keyword>
<keyword id="KW-1194">Viral DNA replication</keyword>
<keyword id="KW-0862">Zinc</keyword>
<comment type="function">
    <text evidence="1">Plays a role in the elongation phase of viral strand displacement replication by unwinding the template in an ATP-independent fashion, employing its capacity to form multimers. Also enhances the rate of initiation. Released from template upon second strand synthesis. Assembles in complex with viral pTP, viral pol, host NFIA and host POU2F1/OCT1 on viral origin of replication. Covers the whole ssDNA genome during synthesis. The complementary strand synthesis induces its relese from DNA template. May inhibit cellular transcription mediated by the interaction between host SRCAP and CBP.</text>
</comment>
<comment type="subunit">
    <text evidence="1">Homomultimerizes on viral ssDNA bound to pTP. Forms a initiation complex with viral polymerase, pTP and hosts NFIA and POU2F1/OCT1. Interacts with host SRCAP.</text>
</comment>
<comment type="subcellular location">
    <subcellularLocation>
        <location evidence="1">Host nucleus</location>
    </subcellularLocation>
    <text evidence="1">Accumulates in infected cells.</text>
</comment>
<comment type="domain">
    <text evidence="1">The C-terminal arm bridges DBP molecules together, thereby creating a chain.</text>
</comment>
<comment type="similarity">
    <text evidence="1">Belongs to the adenoviridae E2A DNA-binding protein family.</text>
</comment>
<dbReference type="EMBL" id="AH002308">
    <property type="protein sequence ID" value="AAA42463.1"/>
    <property type="molecule type" value="Genomic_DNA"/>
</dbReference>
<dbReference type="EMBL" id="X52532">
    <property type="protein sequence ID" value="CAA36759.1"/>
    <property type="molecule type" value="Genomic_DNA"/>
</dbReference>
<dbReference type="PIR" id="D28645">
    <property type="entry name" value="ERAD41"/>
</dbReference>
<dbReference type="SMR" id="P11807"/>
<dbReference type="GO" id="GO:0042025">
    <property type="term" value="C:host cell nucleus"/>
    <property type="evidence" value="ECO:0000250"/>
    <property type="project" value="UniProtKB"/>
</dbReference>
<dbReference type="GO" id="GO:0019028">
    <property type="term" value="C:viral capsid"/>
    <property type="evidence" value="ECO:0000250"/>
    <property type="project" value="UniProtKB"/>
</dbReference>
<dbReference type="GO" id="GO:0003677">
    <property type="term" value="F:DNA binding"/>
    <property type="evidence" value="ECO:0000250"/>
    <property type="project" value="UniProtKB"/>
</dbReference>
<dbReference type="GO" id="GO:0008270">
    <property type="term" value="F:zinc ion binding"/>
    <property type="evidence" value="ECO:0007669"/>
    <property type="project" value="UniProtKB-UniRule"/>
</dbReference>
<dbReference type="GO" id="GO:0006260">
    <property type="term" value="P:DNA replication"/>
    <property type="evidence" value="ECO:0007669"/>
    <property type="project" value="UniProtKB-KW"/>
</dbReference>
<dbReference type="GO" id="GO:0006351">
    <property type="term" value="P:DNA-templated transcription"/>
    <property type="evidence" value="ECO:0007669"/>
    <property type="project" value="UniProtKB-UniRule"/>
</dbReference>
<dbReference type="GO" id="GO:0045740">
    <property type="term" value="P:positive regulation of DNA replication"/>
    <property type="evidence" value="ECO:0007669"/>
    <property type="project" value="UniProtKB-UniRule"/>
</dbReference>
<dbReference type="GO" id="GO:0039693">
    <property type="term" value="P:viral DNA genome replication"/>
    <property type="evidence" value="ECO:0000250"/>
    <property type="project" value="UniProtKB"/>
</dbReference>
<dbReference type="GO" id="GO:0039687">
    <property type="term" value="P:viral DNA strand displacement replication"/>
    <property type="evidence" value="ECO:0000250"/>
    <property type="project" value="UniProtKB"/>
</dbReference>
<dbReference type="FunFam" id="3.90.148.10:FF:000003">
    <property type="match status" value="1"/>
</dbReference>
<dbReference type="FunFam" id="1.10.269.10:FF:000001">
    <property type="entry name" value="DNA-binding protein"/>
    <property type="match status" value="1"/>
</dbReference>
<dbReference type="FunFam" id="1.10.269.10:FF:000002">
    <property type="entry name" value="DNA-binding protein"/>
    <property type="match status" value="1"/>
</dbReference>
<dbReference type="Gene3D" id="3.90.148.10">
    <property type="entry name" value="Adenovirus DNA-binding, C-terminal domain superfamily/Adenovirus DNA-binding, zinc binding domain"/>
    <property type="match status" value="1"/>
</dbReference>
<dbReference type="Gene3D" id="1.10.269.10">
    <property type="entry name" value="Adenovirus DNA-binding, N-terminal domain"/>
    <property type="match status" value="1"/>
</dbReference>
<dbReference type="HAMAP" id="MF_04054">
    <property type="entry name" value="ADV_DNB2"/>
    <property type="match status" value="1"/>
</dbReference>
<dbReference type="InterPro" id="IPR036367">
    <property type="entry name" value="Ad_DBP_C_sf"/>
</dbReference>
<dbReference type="InterPro" id="IPR036368">
    <property type="entry name" value="ADBP_zn-bd_sf"/>
</dbReference>
<dbReference type="InterPro" id="IPR003176">
    <property type="entry name" value="Adenovirus_DNA-bd_a"/>
</dbReference>
<dbReference type="InterPro" id="IPR036362">
    <property type="entry name" value="Adenovirus_DNA-bd_N_sf"/>
</dbReference>
<dbReference type="InterPro" id="IPR005376">
    <property type="entry name" value="Adenovirus_DNA-bd_zn-bd"/>
</dbReference>
<dbReference type="InterPro" id="IPR037540">
    <property type="entry name" value="ADV_DNB2"/>
</dbReference>
<dbReference type="Pfam" id="PF02236">
    <property type="entry name" value="Viral_DNA_bi"/>
    <property type="match status" value="1"/>
</dbReference>
<dbReference type="Pfam" id="PF03728">
    <property type="entry name" value="Viral_DNA_Zn_bi"/>
    <property type="match status" value="2"/>
</dbReference>
<dbReference type="SUPFAM" id="SSF47724">
    <property type="entry name" value="Domain of early E2A DNA-binding protein, ADDBP"/>
    <property type="match status" value="1"/>
</dbReference>
<dbReference type="SUPFAM" id="SSF57917">
    <property type="entry name" value="Zn-binding domains of ADDBP"/>
    <property type="match status" value="2"/>
</dbReference>
<organism>
    <name type="scientific">Human adenovirus F serotype 41</name>
    <name type="common">HAdV-41</name>
    <name type="synonym">Human adenovirus 41</name>
    <dbReference type="NCBI Taxonomy" id="10524"/>
    <lineage>
        <taxon>Viruses</taxon>
        <taxon>Varidnaviria</taxon>
        <taxon>Bamfordvirae</taxon>
        <taxon>Preplasmiviricota</taxon>
        <taxon>Tectiliviricetes</taxon>
        <taxon>Rowavirales</taxon>
        <taxon>Adenoviridae</taxon>
        <taxon>Mastadenovirus</taxon>
        <taxon>Human mastadenovirus F</taxon>
    </lineage>
</organism>
<protein>
    <recommendedName>
        <fullName evidence="1">DNA-binding protein</fullName>
        <shortName evidence="1">DBP</shortName>
    </recommendedName>
    <alternativeName>
        <fullName evidence="1">Early 2A protein</fullName>
    </alternativeName>
    <alternativeName>
        <fullName evidence="1">Early E2A DNA-binding protein</fullName>
    </alternativeName>
</protein>
<sequence length="474" mass="53658">MAGRQREHPTVTPYLQETSPERPPPLPPKKKLRKNLQVPEQVHAPALSPEVVPDSEEDEEVLYHGFSYPGVEVVQKGNGKRQIRRLEKTVIPRDLTPPEEEENNQSGSSKAVTMLITNPQVDPLVSAWEKGMELMNVLMEKYHVENDEKTAFKFLPEQNAVYRKICQTWLNEERRGLSLTFTTQKTFTELMGRFLAAYVETYAGVKHHNWDTTGCAVWAHGCTREEGVLRCFHGREMIQKEQVVEVDVGSENGQRALKEQPSKTKVVQNRWGRSVVQIKNDDARCCAEDVSCGNNMFSSKSCGLFFSEGLKAQIAFKQMQAFLQAEYPQMQRGQQRILVPLRCECLNKKDLVPQLGRQMCKVTPFALSGAEDLKTSEVTDKSALASILHPCVLVFQCANPVYRNSRGSAGPNCDFKISAPDVISALQLVRQFWKENVEDPLPKLIIPEFKWSTRLQYRNVALPTGHGDAEVEPF</sequence>
<accession>P11807</accession>
<evidence type="ECO:0000255" key="1">
    <source>
        <dbReference type="HAMAP-Rule" id="MF_04054"/>
    </source>
</evidence>
<evidence type="ECO:0000256" key="2">
    <source>
        <dbReference type="SAM" id="MobiDB-lite"/>
    </source>
</evidence>
<gene>
    <name evidence="1" type="primary">DBP</name>
</gene>
<name>DNB2_ADE41</name>
<proteinExistence type="inferred from homology"/>
<reference key="1">
    <citation type="journal article" date="1988" name="Virology">
        <title>The genes encoding the DNA binding protein and the 23K protease of adenovirus types 40 and 41.</title>
        <authorList>
            <person name="Vos H.L."/>
            <person name="der Lee F.M."/>
            <person name="Reemst A.M.C.B."/>
            <person name="van Loon A.E."/>
            <person name="Sussenbach J.S."/>
        </authorList>
    </citation>
    <scope>NUCLEOTIDE SEQUENCE [GENOMIC DNA]</scope>
</reference>
<reference key="2">
    <citation type="journal article" date="1990" name="Nucleic Acids Res.">
        <title>Nucleotide sequence of the region coding for 100K and 33K proteins of human enteric adenovirus type 41 (Tak).</title>
        <authorList>
            <person name="Slemenda S.B."/>
            <person name="Pieniazek N.J."/>
            <person name="Velarde J. Jr."/>
            <person name="Pieniazek D."/>
            <person name="Luftig R.B."/>
        </authorList>
    </citation>
    <scope>NUCLEOTIDE SEQUENCE [GENOMIC DNA] OF 1-33</scope>
    <source>
        <strain>Tak</strain>
    </source>
</reference>